<reference key="1">
    <citation type="journal article" date="1999" name="Nature">
        <title>Sequence and analysis of chromosome 2 of the plant Arabidopsis thaliana.</title>
        <authorList>
            <person name="Lin X."/>
            <person name="Kaul S."/>
            <person name="Rounsley S.D."/>
            <person name="Shea T.P."/>
            <person name="Benito M.-I."/>
            <person name="Town C.D."/>
            <person name="Fujii C.Y."/>
            <person name="Mason T.M."/>
            <person name="Bowman C.L."/>
            <person name="Barnstead M.E."/>
            <person name="Feldblyum T.V."/>
            <person name="Buell C.R."/>
            <person name="Ketchum K.A."/>
            <person name="Lee J.J."/>
            <person name="Ronning C.M."/>
            <person name="Koo H.L."/>
            <person name="Moffat K.S."/>
            <person name="Cronin L.A."/>
            <person name="Shen M."/>
            <person name="Pai G."/>
            <person name="Van Aken S."/>
            <person name="Umayam L."/>
            <person name="Tallon L.J."/>
            <person name="Gill J.E."/>
            <person name="Adams M.D."/>
            <person name="Carrera A.J."/>
            <person name="Creasy T.H."/>
            <person name="Goodman H.M."/>
            <person name="Somerville C.R."/>
            <person name="Copenhaver G.P."/>
            <person name="Preuss D."/>
            <person name="Nierman W.C."/>
            <person name="White O."/>
            <person name="Eisen J.A."/>
            <person name="Salzberg S.L."/>
            <person name="Fraser C.M."/>
            <person name="Venter J.C."/>
        </authorList>
    </citation>
    <scope>NUCLEOTIDE SEQUENCE [LARGE SCALE GENOMIC DNA]</scope>
    <source>
        <strain>cv. Columbia</strain>
    </source>
</reference>
<reference key="2">
    <citation type="journal article" date="2017" name="Plant J.">
        <title>Araport11: a complete reannotation of the Arabidopsis thaliana reference genome.</title>
        <authorList>
            <person name="Cheng C.Y."/>
            <person name="Krishnakumar V."/>
            <person name="Chan A.P."/>
            <person name="Thibaud-Nissen F."/>
            <person name="Schobel S."/>
            <person name="Town C.D."/>
        </authorList>
    </citation>
    <scope>GENOME REANNOTATION</scope>
    <source>
        <strain>cv. Columbia</strain>
    </source>
</reference>
<reference key="3">
    <citation type="journal article" date="2005" name="Plant Physiol.">
        <title>Analysis of the cDNAs of hypothetical genes on Arabidopsis chromosome 2 reveals numerous transcript variants.</title>
        <authorList>
            <person name="Xiao Y.-L."/>
            <person name="Smith S.R."/>
            <person name="Ishmael N."/>
            <person name="Redman J.C."/>
            <person name="Kumar N."/>
            <person name="Monaghan E.L."/>
            <person name="Ayele M."/>
            <person name="Haas B.J."/>
            <person name="Wu H.C."/>
            <person name="Town C.D."/>
        </authorList>
    </citation>
    <scope>NUCLEOTIDE SEQUENCE [LARGE SCALE MRNA] OF 1-138</scope>
    <source>
        <strain>cv. Columbia</strain>
    </source>
</reference>
<dbReference type="EMBL" id="AC006248">
    <property type="protein sequence ID" value="AAD17408.1"/>
    <property type="molecule type" value="Genomic_DNA"/>
</dbReference>
<dbReference type="EMBL" id="CP002685">
    <property type="protein sequence ID" value="AEC06426.1"/>
    <property type="molecule type" value="Genomic_DNA"/>
</dbReference>
<dbReference type="EMBL" id="AY464634">
    <property type="status" value="NOT_ANNOTATED_CDS"/>
    <property type="molecule type" value="mRNA"/>
</dbReference>
<dbReference type="PIR" id="E84531">
    <property type="entry name" value="E84531"/>
</dbReference>
<dbReference type="RefSeq" id="NP_179166.1">
    <property type="nucleotide sequence ID" value="NM_127125.3"/>
</dbReference>
<dbReference type="FunCoup" id="Q9ZQF0">
    <property type="interactions" value="28"/>
</dbReference>
<dbReference type="PaxDb" id="3702-AT2G15640.1"/>
<dbReference type="EnsemblPlants" id="AT2G15640.1">
    <property type="protein sequence ID" value="AT2G15640.1"/>
    <property type="gene ID" value="AT2G15640"/>
</dbReference>
<dbReference type="GeneID" id="816057"/>
<dbReference type="Gramene" id="AT2G15640.1">
    <property type="protein sequence ID" value="AT2G15640.1"/>
    <property type="gene ID" value="AT2G15640"/>
</dbReference>
<dbReference type="KEGG" id="ath:AT2G15640"/>
<dbReference type="Araport" id="AT2G15640"/>
<dbReference type="TAIR" id="AT2G15640"/>
<dbReference type="HOGENOM" id="CLU_027176_9_0_1"/>
<dbReference type="InParanoid" id="Q9ZQF0"/>
<dbReference type="OMA" id="HDIMSEG"/>
<dbReference type="PhylomeDB" id="Q9ZQF0"/>
<dbReference type="PRO" id="PR:Q9ZQF0"/>
<dbReference type="Proteomes" id="UP000006548">
    <property type="component" value="Chromosome 2"/>
</dbReference>
<dbReference type="ExpressionAtlas" id="Q9ZQF0">
    <property type="expression patterns" value="baseline and differential"/>
</dbReference>
<dbReference type="CDD" id="cd22157">
    <property type="entry name" value="F-box_AtFBW1-like"/>
    <property type="match status" value="1"/>
</dbReference>
<dbReference type="InterPro" id="IPR013187">
    <property type="entry name" value="F-box-assoc_dom_typ3"/>
</dbReference>
<dbReference type="InterPro" id="IPR017451">
    <property type="entry name" value="F-box-assoc_interact_dom"/>
</dbReference>
<dbReference type="InterPro" id="IPR036047">
    <property type="entry name" value="F-box-like_dom_sf"/>
</dbReference>
<dbReference type="InterPro" id="IPR001810">
    <property type="entry name" value="F-box_dom"/>
</dbReference>
<dbReference type="NCBIfam" id="TIGR01640">
    <property type="entry name" value="F_box_assoc_1"/>
    <property type="match status" value="1"/>
</dbReference>
<dbReference type="PANTHER" id="PTHR31111">
    <property type="entry name" value="BNAA05G37150D PROTEIN-RELATED"/>
    <property type="match status" value="1"/>
</dbReference>
<dbReference type="PANTHER" id="PTHR31111:SF130">
    <property type="entry name" value="F-BOX ASSOCIATED UBIQUITINATION EFFECTOR FAMILY PROTEIN"/>
    <property type="match status" value="1"/>
</dbReference>
<dbReference type="Pfam" id="PF00646">
    <property type="entry name" value="F-box"/>
    <property type="match status" value="1"/>
</dbReference>
<dbReference type="Pfam" id="PF08268">
    <property type="entry name" value="FBA_3"/>
    <property type="match status" value="1"/>
</dbReference>
<dbReference type="SUPFAM" id="SSF81383">
    <property type="entry name" value="F-box domain"/>
    <property type="match status" value="1"/>
</dbReference>
<proteinExistence type="evidence at transcript level"/>
<organism>
    <name type="scientific">Arabidopsis thaliana</name>
    <name type="common">Mouse-ear cress</name>
    <dbReference type="NCBI Taxonomy" id="3702"/>
    <lineage>
        <taxon>Eukaryota</taxon>
        <taxon>Viridiplantae</taxon>
        <taxon>Streptophyta</taxon>
        <taxon>Embryophyta</taxon>
        <taxon>Tracheophyta</taxon>
        <taxon>Spermatophyta</taxon>
        <taxon>Magnoliopsida</taxon>
        <taxon>eudicotyledons</taxon>
        <taxon>Gunneridae</taxon>
        <taxon>Pentapetalae</taxon>
        <taxon>rosids</taxon>
        <taxon>malvids</taxon>
        <taxon>Brassicales</taxon>
        <taxon>Brassicaceae</taxon>
        <taxon>Camelineae</taxon>
        <taxon>Arabidopsis</taxon>
    </lineage>
</organism>
<feature type="chain" id="PRO_0000283377" description="F-box protein At2g15640">
    <location>
        <begin position="1"/>
        <end position="426"/>
    </location>
</feature>
<feature type="domain" description="F-box">
    <location>
        <begin position="1"/>
        <end position="48"/>
    </location>
</feature>
<protein>
    <recommendedName>
        <fullName>F-box protein At2g15640</fullName>
    </recommendedName>
</protein>
<gene>
    <name type="ordered locus">At2g15640</name>
    <name type="ORF">F9O13.19</name>
</gene>
<sequence>MNPSTITNDLTVEILSRLPAKSVARFHCVSKQWGSIFGSPYFKELFLTRSSTKPRLLFAMAEKVNEEKNCVWRFFSTPQLENPYEKSSSTLVAAAEFHVKFSPDKLYICHCYDLKYFSIGYASGLIYLYGDRGEATPLICNPTTGRYAILPNRYTYRKAYSFFGFDPIDKQYKALSIFYPSGPGHSKILTFGAGHMKWRKINCPLRYDRHDIKSEGICINGVLYYLGSTSDCVKDGHGIVSDYVIVCFDIRSEKFTFIDVERFCRLINYKGKLAVIYWEDDVDIYKLYYSDVDEYVEYNINDDDINELRVWVLEDVKKQQWSKYAYTWTDDRFFRRRVSIAGGTASGEIVFSMLKYTPKQPFYVFYFNPERNTLQRVEIQGFGEVLKKTCRVCTFVNHVEDLNVHDFKQLKSVHPPLVDEPDSESD</sequence>
<accession>Q9ZQF0</accession>
<name>FB104_ARATH</name>
<keyword id="KW-1185">Reference proteome</keyword>